<protein>
    <recommendedName>
        <fullName>Wall-associated receptor kinase 1</fullName>
        <ecNumber>2.7.11.-</ecNumber>
    </recommendedName>
</protein>
<sequence length="735" mass="81211">MKVQEGLFLVAIFFSLACTQLVKGQHQPGENCQNKCGNITIEYPFGISSGCYYPGNESFSITCKEDRPHVLSDIEVANFNHSGQLQVLLNRSSTCYDEQGKKTEEDSSFTLENLSLSANNKLTAVGCNALSLLDTFGMQNYSTACLSLCDSPPEADGECNGRGCCRVDVSAPLDSYTFETTSGRIKHMTSFHDFSPCTYAFLVEDDKFNFSSTEDLLNLRNVMRFPVLLDWSVGNQTCEQVGSTSICGGNSTCLDSTPRNGYICRCNEGFDGNPYLSAGCQDVNECTTSSTIHRHNCSDPKTCRNKVGGFYCKCQSGYRLDTTTMSCKRKEFAWTTILLVTTIGFLVILLGVACIQQRMKHLKDTKLREQFFEQNGGGMLTQRLSGAGPSNVDVKIFTEDGMKKATNGYAESRILGQGGQGTVYKGILPDNSIVAIKKARLGDSSQVEQFINEVLVLSQINHRNVVKLLGCCLETEVPLLVYEFITNGTLFDHLHGSMIDSSLTWEHRLKIAIEVAGTLAYLHSSASIPIIHRDIKTANILLDVNLTAKVADFGASRLIPMDKEELETMVQGTLGYLDPEYYNTGLLNEKSDVYSFGVVLMELLSGQKALCFKRPQSSKHLVSYFATATKENRLDEIIGGEVMNEDNLKEIQEAARIAAECTRLMGEERPRMKEVAAKLEALRVEKTKHKWSDQYPEENEHLIGGHILSAQGETSSSIGYDSIKNVAILDIETGR</sequence>
<organism>
    <name type="scientific">Arabidopsis thaliana</name>
    <name type="common">Mouse-ear cress</name>
    <dbReference type="NCBI Taxonomy" id="3702"/>
    <lineage>
        <taxon>Eukaryota</taxon>
        <taxon>Viridiplantae</taxon>
        <taxon>Streptophyta</taxon>
        <taxon>Embryophyta</taxon>
        <taxon>Tracheophyta</taxon>
        <taxon>Spermatophyta</taxon>
        <taxon>Magnoliopsida</taxon>
        <taxon>eudicotyledons</taxon>
        <taxon>Gunneridae</taxon>
        <taxon>Pentapetalae</taxon>
        <taxon>rosids</taxon>
        <taxon>malvids</taxon>
        <taxon>Brassicales</taxon>
        <taxon>Brassicaceae</taxon>
        <taxon>Camelineae</taxon>
        <taxon>Arabidopsis</taxon>
    </lineage>
</organism>
<reference key="1">
    <citation type="journal article" date="1999" name="Plant Mol. Biol.">
        <title>A cluster of five cell wall-associated receptor kinase genes, Wak1-5, are expressed in specific organs of Arabidopsis.</title>
        <authorList>
            <person name="He Z.-H."/>
            <person name="Cheeseman I."/>
            <person name="He D."/>
            <person name="Kohorn B.D."/>
        </authorList>
    </citation>
    <scope>NUCLEOTIDE SEQUENCE [GENOMIC DNA]</scope>
    <scope>TISSUE SPECIFICITY</scope>
    <scope>INDUCTION</scope>
</reference>
<reference key="2">
    <citation type="journal article" date="2000" name="Nature">
        <title>Sequence and analysis of chromosome 1 of the plant Arabidopsis thaliana.</title>
        <authorList>
            <person name="Theologis A."/>
            <person name="Ecker J.R."/>
            <person name="Palm C.J."/>
            <person name="Federspiel N.A."/>
            <person name="Kaul S."/>
            <person name="White O."/>
            <person name="Alonso J."/>
            <person name="Altafi H."/>
            <person name="Araujo R."/>
            <person name="Bowman C.L."/>
            <person name="Brooks S.Y."/>
            <person name="Buehler E."/>
            <person name="Chan A."/>
            <person name="Chao Q."/>
            <person name="Chen H."/>
            <person name="Cheuk R.F."/>
            <person name="Chin C.W."/>
            <person name="Chung M.K."/>
            <person name="Conn L."/>
            <person name="Conway A.B."/>
            <person name="Conway A.R."/>
            <person name="Creasy T.H."/>
            <person name="Dewar K."/>
            <person name="Dunn P."/>
            <person name="Etgu P."/>
            <person name="Feldblyum T.V."/>
            <person name="Feng J.-D."/>
            <person name="Fong B."/>
            <person name="Fujii C.Y."/>
            <person name="Gill J.E."/>
            <person name="Goldsmith A.D."/>
            <person name="Haas B."/>
            <person name="Hansen N.F."/>
            <person name="Hughes B."/>
            <person name="Huizar L."/>
            <person name="Hunter J.L."/>
            <person name="Jenkins J."/>
            <person name="Johnson-Hopson C."/>
            <person name="Khan S."/>
            <person name="Khaykin E."/>
            <person name="Kim C.J."/>
            <person name="Koo H.L."/>
            <person name="Kremenetskaia I."/>
            <person name="Kurtz D.B."/>
            <person name="Kwan A."/>
            <person name="Lam B."/>
            <person name="Langin-Hooper S."/>
            <person name="Lee A."/>
            <person name="Lee J.M."/>
            <person name="Lenz C.A."/>
            <person name="Li J.H."/>
            <person name="Li Y.-P."/>
            <person name="Lin X."/>
            <person name="Liu S.X."/>
            <person name="Liu Z.A."/>
            <person name="Luros J.S."/>
            <person name="Maiti R."/>
            <person name="Marziali A."/>
            <person name="Militscher J."/>
            <person name="Miranda M."/>
            <person name="Nguyen M."/>
            <person name="Nierman W.C."/>
            <person name="Osborne B.I."/>
            <person name="Pai G."/>
            <person name="Peterson J."/>
            <person name="Pham P.K."/>
            <person name="Rizzo M."/>
            <person name="Rooney T."/>
            <person name="Rowley D."/>
            <person name="Sakano H."/>
            <person name="Salzberg S.L."/>
            <person name="Schwartz J.R."/>
            <person name="Shinn P."/>
            <person name="Southwick A.M."/>
            <person name="Sun H."/>
            <person name="Tallon L.J."/>
            <person name="Tambunga G."/>
            <person name="Toriumi M.J."/>
            <person name="Town C.D."/>
            <person name="Utterback T."/>
            <person name="Van Aken S."/>
            <person name="Vaysberg M."/>
            <person name="Vysotskaia V.S."/>
            <person name="Walker M."/>
            <person name="Wu D."/>
            <person name="Yu G."/>
            <person name="Fraser C.M."/>
            <person name="Venter J.C."/>
            <person name="Davis R.W."/>
        </authorList>
    </citation>
    <scope>NUCLEOTIDE SEQUENCE [LARGE SCALE GENOMIC DNA]</scope>
    <source>
        <strain>cv. Columbia</strain>
    </source>
</reference>
<reference key="3">
    <citation type="journal article" date="2017" name="Plant J.">
        <title>Araport11: a complete reannotation of the Arabidopsis thaliana reference genome.</title>
        <authorList>
            <person name="Cheng C.Y."/>
            <person name="Krishnakumar V."/>
            <person name="Chan A.P."/>
            <person name="Thibaud-Nissen F."/>
            <person name="Schobel S."/>
            <person name="Town C.D."/>
        </authorList>
    </citation>
    <scope>GENOME REANNOTATION</scope>
    <source>
        <strain>cv. Columbia</strain>
    </source>
</reference>
<reference key="4">
    <citation type="journal article" date="2003" name="Science">
        <title>Empirical analysis of transcriptional activity in the Arabidopsis genome.</title>
        <authorList>
            <person name="Yamada K."/>
            <person name="Lim J."/>
            <person name="Dale J.M."/>
            <person name="Chen H."/>
            <person name="Shinn P."/>
            <person name="Palm C.J."/>
            <person name="Southwick A.M."/>
            <person name="Wu H.C."/>
            <person name="Kim C.J."/>
            <person name="Nguyen M."/>
            <person name="Pham P.K."/>
            <person name="Cheuk R.F."/>
            <person name="Karlin-Newmann G."/>
            <person name="Liu S.X."/>
            <person name="Lam B."/>
            <person name="Sakano H."/>
            <person name="Wu T."/>
            <person name="Yu G."/>
            <person name="Miranda M."/>
            <person name="Quach H.L."/>
            <person name="Tripp M."/>
            <person name="Chang C.H."/>
            <person name="Lee J.M."/>
            <person name="Toriumi M.J."/>
            <person name="Chan M.M."/>
            <person name="Tang C.C."/>
            <person name="Onodera C.S."/>
            <person name="Deng J.M."/>
            <person name="Akiyama K."/>
            <person name="Ansari Y."/>
            <person name="Arakawa T."/>
            <person name="Banh J."/>
            <person name="Banno F."/>
            <person name="Bowser L."/>
            <person name="Brooks S.Y."/>
            <person name="Carninci P."/>
            <person name="Chao Q."/>
            <person name="Choy N."/>
            <person name="Enju A."/>
            <person name="Goldsmith A.D."/>
            <person name="Gurjal M."/>
            <person name="Hansen N.F."/>
            <person name="Hayashizaki Y."/>
            <person name="Johnson-Hopson C."/>
            <person name="Hsuan V.W."/>
            <person name="Iida K."/>
            <person name="Karnes M."/>
            <person name="Khan S."/>
            <person name="Koesema E."/>
            <person name="Ishida J."/>
            <person name="Jiang P.X."/>
            <person name="Jones T."/>
            <person name="Kawai J."/>
            <person name="Kamiya A."/>
            <person name="Meyers C."/>
            <person name="Nakajima M."/>
            <person name="Narusaka M."/>
            <person name="Seki M."/>
            <person name="Sakurai T."/>
            <person name="Satou M."/>
            <person name="Tamse R."/>
            <person name="Vaysberg M."/>
            <person name="Wallender E.K."/>
            <person name="Wong C."/>
            <person name="Yamamura Y."/>
            <person name="Yuan S."/>
            <person name="Shinozaki K."/>
            <person name="Davis R.W."/>
            <person name="Theologis A."/>
            <person name="Ecker J.R."/>
        </authorList>
    </citation>
    <scope>NUCLEOTIDE SEQUENCE [LARGE SCALE MRNA]</scope>
    <source>
        <strain>cv. Columbia</strain>
    </source>
</reference>
<reference key="5">
    <citation type="journal article" date="1992" name="Proc. Natl. Acad. Sci. U.S.A.">
        <title>An Arabidopsis serine/threonine kinase homologue with an epidermal growth factor repeat selected in yeast for its specificity for a thylakoid membrane protein.</title>
        <authorList>
            <person name="Kohorn B.D."/>
            <person name="Lane S."/>
            <person name="Smith T.A."/>
        </authorList>
    </citation>
    <scope>NUCLEOTIDE SEQUENCE [MRNA] OF 50-735</scope>
    <scope>TISSUE SPECIFICITY</scope>
    <source>
        <strain>cv. Columbia</strain>
    </source>
</reference>
<reference key="6">
    <citation type="submission" date="2005-03" db="EMBL/GenBank/DDBJ databases">
        <title>Large-scale analysis of RIKEN Arabidopsis full-length (RAFL) cDNAs.</title>
        <authorList>
            <person name="Totoki Y."/>
            <person name="Seki M."/>
            <person name="Ishida J."/>
            <person name="Nakajima M."/>
            <person name="Enju A."/>
            <person name="Kamiya A."/>
            <person name="Narusaka M."/>
            <person name="Shin-i T."/>
            <person name="Nakagawa M."/>
            <person name="Sakamoto N."/>
            <person name="Oishi K."/>
            <person name="Kohara Y."/>
            <person name="Kobayashi M."/>
            <person name="Toyoda A."/>
            <person name="Sakaki Y."/>
            <person name="Sakurai T."/>
            <person name="Iida K."/>
            <person name="Akiyama K."/>
            <person name="Satou M."/>
            <person name="Toyoda T."/>
            <person name="Konagaya A."/>
            <person name="Carninci P."/>
            <person name="Kawai J."/>
            <person name="Hayashizaki Y."/>
            <person name="Shinozaki K."/>
        </authorList>
    </citation>
    <scope>NUCLEOTIDE SEQUENCE [LARGE SCALE MRNA] OF 419-735</scope>
    <source>
        <strain>cv. Columbia</strain>
    </source>
</reference>
<reference key="7">
    <citation type="journal article" date="1996" name="J. Biol. Chem.">
        <title>A cell wall-associated, receptor-like protein kinase.</title>
        <authorList>
            <person name="He Z.-H."/>
            <person name="Fujiki M."/>
            <person name="Kohorn B.D."/>
        </authorList>
    </citation>
    <scope>SUBCELLULAR LOCATION</scope>
</reference>
<reference key="8">
    <citation type="journal article" date="1998" name="Plant J.">
        <title>Requirement for the induced expression of a cell wall associated receptor kinase for survival during the pathogen response.</title>
        <authorList>
            <person name="He Z.-H."/>
            <person name="He D."/>
            <person name="Kohorn B.D."/>
        </authorList>
    </citation>
    <scope>TISSUE SPECIFICITY</scope>
    <scope>INDUCTION</scope>
</reference>
<reference key="9">
    <citation type="journal article" date="2000" name="Proc. Natl. Acad. Sci. U.S.A.">
        <title>Coordinated plant defense responses in Arabidopsis revealed by microarray analysis.</title>
        <authorList>
            <person name="Schenk P.M."/>
            <person name="Kazan K."/>
            <person name="Wilson I."/>
            <person name="Anderson J.P."/>
            <person name="Richmond T."/>
            <person name="Somerville S.C."/>
            <person name="Manners J.M."/>
        </authorList>
    </citation>
    <scope>INDUCTION</scope>
</reference>
<reference key="10">
    <citation type="journal article" date="2001" name="J. Biol. Chem.">
        <title>Interaction of the Arabidopsis receptor protein kinase Wak1 with a glycine-rich protein, AtGRP-3.</title>
        <authorList>
            <person name="Park A.R."/>
            <person name="Cho S.K."/>
            <person name="Yun U.J."/>
            <person name="Jin M.Y."/>
            <person name="Lee S.H."/>
            <person name="Sachetto-Martins G."/>
            <person name="Park O.K."/>
        </authorList>
    </citation>
    <scope>INTERACTION WITH GRP3 AND GRP3S</scope>
    <scope>INDUCTION</scope>
    <scope>TISSUE SPECIFICITY</scope>
</reference>
<reference key="11">
    <citation type="journal article" date="2001" name="Plant Cell">
        <title>Wall-associated kinases are expressed throughout plant development and are required for cell expansion.</title>
        <authorList>
            <person name="Wagner T.A."/>
            <person name="Kohorn B.D."/>
        </authorList>
    </citation>
    <scope>FUNCTION</scope>
    <scope>INDUCTION</scope>
    <scope>DEVELOPMENTAL STAGE</scope>
    <scope>BINDING TO PECTIN</scope>
</reference>
<reference key="12">
    <citation type="journal article" date="2001" name="Plant Mol. Biol.">
        <title>WAKs: cell wall-associated kinases linking the cytoplasm to the extracellular matrix.</title>
        <authorList>
            <person name="Anderson C.M."/>
            <person name="Wagner T.A."/>
            <person name="Perret M."/>
            <person name="He Z.-H."/>
            <person name="He D."/>
            <person name="Kohorn B.D."/>
        </authorList>
    </citation>
    <scope>INTERACTION WITH KAPP</scope>
</reference>
<reference key="13">
    <citation type="journal article" date="2002" name="Plant Physiol.">
        <title>The cell wall-associated kinase (WAK) and WAK-like kinase gene family.</title>
        <authorList>
            <person name="Verica J.A."/>
            <person name="He Z.-H."/>
        </authorList>
    </citation>
    <scope>GENE FAMILY ORGANIZATION</scope>
</reference>
<reference key="14">
    <citation type="journal article" date="2003" name="Biochem. Biophys. Res. Commun.">
        <title>Oxygen-evolving enhancer protein 2 is phosphorylated by glycine-rich protein 3/wall-associated kinase 1 in Arabidopsis.</title>
        <authorList>
            <person name="Yang E.J."/>
            <person name="Oh Y.A."/>
            <person name="Lee E.S."/>
            <person name="Park A.R."/>
            <person name="Cho S.K."/>
            <person name="Yoo Y.J."/>
            <person name="Park O.K."/>
        </authorList>
    </citation>
    <scope>FUNCTION</scope>
    <scope>INTERACTION WITH OEE2</scope>
</reference>
<reference key="15">
    <citation type="journal article" date="2003" name="Plant Physiol.">
        <title>Aluminum-induced gene expression and protein localization of a cell wall-associated receptor kinase in Arabidopsis.</title>
        <authorList>
            <person name="Sivaguru M."/>
            <person name="Ezaki B."/>
            <person name="He Z.-H."/>
            <person name="Tong H.-Y."/>
            <person name="Osawa H."/>
            <person name="Baluska F."/>
            <person name="Volkmann D."/>
            <person name="Matsumoto H."/>
        </authorList>
    </citation>
    <scope>FUNCTION</scope>
    <scope>INDUCTION</scope>
</reference>
<reference key="16">
    <citation type="journal article" date="2005" name="Plant Cell Physiol.">
        <title>Wall-associated kinase WAK1 interacts with cell wall pectins in a calcium-induced conformation.</title>
        <authorList>
            <person name="Decreux A."/>
            <person name="Messiaen J."/>
        </authorList>
    </citation>
    <scope>BINDING TO PECTIN</scope>
</reference>
<reference key="17">
    <citation type="journal article" date="2006" name="Phytochemistry">
        <title>In vitro characterization of the homogalacturonan-binding domain of the wall-associated kinase WAK1 using site-directed mutagenesis.</title>
        <authorList>
            <person name="Decreux A."/>
            <person name="Thomas A."/>
            <person name="Spies B."/>
            <person name="Brasseur R."/>
            <person name="Van Cutsem P."/>
            <person name="Messiaen J."/>
        </authorList>
    </citation>
    <scope>BINDING TO PECTIN</scope>
    <scope>MUTAGENESIS OF ARG-67; ARG-91; LYS-101; LYS-102 AND ARG-166</scope>
</reference>
<dbReference type="EC" id="2.7.11.-"/>
<dbReference type="EMBL" id="AJ009696">
    <property type="protein sequence ID" value="CAA08794.1"/>
    <property type="molecule type" value="Genomic_DNA"/>
</dbReference>
<dbReference type="EMBL" id="AC036104">
    <property type="protein sequence ID" value="AAF81356.1"/>
    <property type="status" value="ALT_SEQ"/>
    <property type="molecule type" value="Genomic_DNA"/>
</dbReference>
<dbReference type="EMBL" id="CP002684">
    <property type="protein sequence ID" value="AEE30079.1"/>
    <property type="molecule type" value="Genomic_DNA"/>
</dbReference>
<dbReference type="EMBL" id="AY039917">
    <property type="protein sequence ID" value="AAK64021.1"/>
    <property type="molecule type" value="mRNA"/>
</dbReference>
<dbReference type="EMBL" id="BT001967">
    <property type="protein sequence ID" value="AAN71966.1"/>
    <property type="molecule type" value="mRNA"/>
</dbReference>
<dbReference type="EMBL" id="L04999">
    <property type="protein sequence ID" value="AAA32844.1"/>
    <property type="status" value="ALT_FRAME"/>
    <property type="molecule type" value="mRNA"/>
</dbReference>
<dbReference type="EMBL" id="AK221950">
    <property type="protein sequence ID" value="BAD94420.1"/>
    <property type="molecule type" value="mRNA"/>
</dbReference>
<dbReference type="PIR" id="H86345">
    <property type="entry name" value="A46373"/>
</dbReference>
<dbReference type="RefSeq" id="NP_564137.1">
    <property type="nucleotide sequence ID" value="NM_101978.5"/>
</dbReference>
<dbReference type="SMR" id="Q39191"/>
<dbReference type="BioGRID" id="23960">
    <property type="interactions" value="3"/>
</dbReference>
<dbReference type="FunCoup" id="Q39191">
    <property type="interactions" value="87"/>
</dbReference>
<dbReference type="IntAct" id="Q39191">
    <property type="interactions" value="4"/>
</dbReference>
<dbReference type="STRING" id="3702.Q39191"/>
<dbReference type="GlyCosmos" id="Q39191">
    <property type="glycosylation" value="10 sites, No reported glycans"/>
</dbReference>
<dbReference type="GlyGen" id="Q39191">
    <property type="glycosylation" value="10 sites"/>
</dbReference>
<dbReference type="iPTMnet" id="Q39191"/>
<dbReference type="PaxDb" id="3702-AT1G21250.1"/>
<dbReference type="ProteomicsDB" id="242652"/>
<dbReference type="EnsemblPlants" id="AT1G21250.1">
    <property type="protein sequence ID" value="AT1G21250.1"/>
    <property type="gene ID" value="AT1G21250"/>
</dbReference>
<dbReference type="GeneID" id="838721"/>
<dbReference type="Gramene" id="AT1G21250.1">
    <property type="protein sequence ID" value="AT1G21250.1"/>
    <property type="gene ID" value="AT1G21250"/>
</dbReference>
<dbReference type="KEGG" id="ath:AT1G21250"/>
<dbReference type="Araport" id="AT1G21250"/>
<dbReference type="TAIR" id="AT1G21250">
    <property type="gene designation" value="WAK1"/>
</dbReference>
<dbReference type="eggNOG" id="ENOG502QQPF">
    <property type="taxonomic scope" value="Eukaryota"/>
</dbReference>
<dbReference type="HOGENOM" id="CLU_000288_43_5_1"/>
<dbReference type="InParanoid" id="Q39191"/>
<dbReference type="OMA" id="INFFITC"/>
<dbReference type="PhylomeDB" id="Q39191"/>
<dbReference type="PRO" id="PR:Q39191"/>
<dbReference type="Proteomes" id="UP000006548">
    <property type="component" value="Chromosome 1"/>
</dbReference>
<dbReference type="ExpressionAtlas" id="Q39191">
    <property type="expression patterns" value="baseline and differential"/>
</dbReference>
<dbReference type="GO" id="GO:0009505">
    <property type="term" value="C:plant-type cell wall"/>
    <property type="evidence" value="ECO:0000314"/>
    <property type="project" value="TAIR"/>
</dbReference>
<dbReference type="GO" id="GO:0000325">
    <property type="term" value="C:plant-type vacuole"/>
    <property type="evidence" value="ECO:0007005"/>
    <property type="project" value="TAIR"/>
</dbReference>
<dbReference type="GO" id="GO:0005886">
    <property type="term" value="C:plasma membrane"/>
    <property type="evidence" value="ECO:0000250"/>
    <property type="project" value="TAIR"/>
</dbReference>
<dbReference type="GO" id="GO:0005524">
    <property type="term" value="F:ATP binding"/>
    <property type="evidence" value="ECO:0007669"/>
    <property type="project" value="UniProtKB-KW"/>
</dbReference>
<dbReference type="GO" id="GO:0005509">
    <property type="term" value="F:calcium ion binding"/>
    <property type="evidence" value="ECO:0007669"/>
    <property type="project" value="InterPro"/>
</dbReference>
<dbReference type="GO" id="GO:0016301">
    <property type="term" value="F:kinase activity"/>
    <property type="evidence" value="ECO:0000250"/>
    <property type="project" value="TAIR"/>
</dbReference>
<dbReference type="GO" id="GO:0030247">
    <property type="term" value="F:polysaccharide binding"/>
    <property type="evidence" value="ECO:0007669"/>
    <property type="project" value="InterPro"/>
</dbReference>
<dbReference type="GO" id="GO:0106310">
    <property type="term" value="F:protein serine kinase activity"/>
    <property type="evidence" value="ECO:0007669"/>
    <property type="project" value="RHEA"/>
</dbReference>
<dbReference type="GO" id="GO:0004674">
    <property type="term" value="F:protein serine/threonine kinase activity"/>
    <property type="evidence" value="ECO:0007669"/>
    <property type="project" value="UniProtKB-KW"/>
</dbReference>
<dbReference type="GO" id="GO:0007166">
    <property type="term" value="P:cell surface receptor signaling pathway"/>
    <property type="evidence" value="ECO:0000353"/>
    <property type="project" value="TAIR"/>
</dbReference>
<dbReference type="GO" id="GO:0050832">
    <property type="term" value="P:defense response to fungus"/>
    <property type="evidence" value="ECO:0000315"/>
    <property type="project" value="TAIR"/>
</dbReference>
<dbReference type="GO" id="GO:0009751">
    <property type="term" value="P:response to salicylic acid"/>
    <property type="evidence" value="ECO:0000270"/>
    <property type="project" value="TAIR"/>
</dbReference>
<dbReference type="GO" id="GO:0009615">
    <property type="term" value="P:response to virus"/>
    <property type="evidence" value="ECO:0000270"/>
    <property type="project" value="TAIR"/>
</dbReference>
<dbReference type="CDD" id="cd00054">
    <property type="entry name" value="EGF_CA"/>
    <property type="match status" value="1"/>
</dbReference>
<dbReference type="CDD" id="cd14066">
    <property type="entry name" value="STKc_IRAK"/>
    <property type="match status" value="1"/>
</dbReference>
<dbReference type="FunFam" id="1.10.510.10:FF:000084">
    <property type="entry name" value="Wall-associated receptor kinase 2"/>
    <property type="match status" value="1"/>
</dbReference>
<dbReference type="FunFam" id="2.10.25.10:FF:001054">
    <property type="entry name" value="Wall-associated receptor kinase 2"/>
    <property type="match status" value="1"/>
</dbReference>
<dbReference type="FunFam" id="3.30.200.20:FF:000043">
    <property type="entry name" value="Wall-associated receptor kinase 2"/>
    <property type="match status" value="1"/>
</dbReference>
<dbReference type="Gene3D" id="2.10.25.10">
    <property type="entry name" value="Laminin"/>
    <property type="match status" value="1"/>
</dbReference>
<dbReference type="Gene3D" id="3.30.200.20">
    <property type="entry name" value="Phosphorylase Kinase, domain 1"/>
    <property type="match status" value="1"/>
</dbReference>
<dbReference type="Gene3D" id="1.10.510.10">
    <property type="entry name" value="Transferase(Phosphotransferase) domain 1"/>
    <property type="match status" value="1"/>
</dbReference>
<dbReference type="InterPro" id="IPR001881">
    <property type="entry name" value="EGF-like_Ca-bd_dom"/>
</dbReference>
<dbReference type="InterPro" id="IPR000742">
    <property type="entry name" value="EGF-like_dom"/>
</dbReference>
<dbReference type="InterPro" id="IPR000152">
    <property type="entry name" value="EGF-type_Asp/Asn_hydroxyl_site"/>
</dbReference>
<dbReference type="InterPro" id="IPR018097">
    <property type="entry name" value="EGF_Ca-bd_CS"/>
</dbReference>
<dbReference type="InterPro" id="IPR011009">
    <property type="entry name" value="Kinase-like_dom_sf"/>
</dbReference>
<dbReference type="InterPro" id="IPR049883">
    <property type="entry name" value="NOTCH1_EGF-like"/>
</dbReference>
<dbReference type="InterPro" id="IPR000719">
    <property type="entry name" value="Prot_kinase_dom"/>
</dbReference>
<dbReference type="InterPro" id="IPR001245">
    <property type="entry name" value="Ser-Thr/Tyr_kinase_cat_dom"/>
</dbReference>
<dbReference type="InterPro" id="IPR008271">
    <property type="entry name" value="Ser/Thr_kinase_AS"/>
</dbReference>
<dbReference type="InterPro" id="IPR045274">
    <property type="entry name" value="WAK-like"/>
</dbReference>
<dbReference type="InterPro" id="IPR025287">
    <property type="entry name" value="WAK_GUB"/>
</dbReference>
<dbReference type="PANTHER" id="PTHR27005:SF511">
    <property type="entry name" value="WALL-ASSOCIATED RECEPTOR KINASE 1-RELATED"/>
    <property type="match status" value="1"/>
</dbReference>
<dbReference type="PANTHER" id="PTHR27005">
    <property type="entry name" value="WALL-ASSOCIATED RECEPTOR KINASE-LIKE 21"/>
    <property type="match status" value="1"/>
</dbReference>
<dbReference type="Pfam" id="PF07645">
    <property type="entry name" value="EGF_CA"/>
    <property type="match status" value="1"/>
</dbReference>
<dbReference type="Pfam" id="PF13947">
    <property type="entry name" value="GUB_WAK_bind"/>
    <property type="match status" value="1"/>
</dbReference>
<dbReference type="Pfam" id="PF07714">
    <property type="entry name" value="PK_Tyr_Ser-Thr"/>
    <property type="match status" value="1"/>
</dbReference>
<dbReference type="SMART" id="SM00181">
    <property type="entry name" value="EGF"/>
    <property type="match status" value="2"/>
</dbReference>
<dbReference type="SMART" id="SM00179">
    <property type="entry name" value="EGF_CA"/>
    <property type="match status" value="2"/>
</dbReference>
<dbReference type="SMART" id="SM00220">
    <property type="entry name" value="S_TKc"/>
    <property type="match status" value="1"/>
</dbReference>
<dbReference type="SUPFAM" id="SSF57196">
    <property type="entry name" value="EGF/Laminin"/>
    <property type="match status" value="1"/>
</dbReference>
<dbReference type="SUPFAM" id="SSF56112">
    <property type="entry name" value="Protein kinase-like (PK-like)"/>
    <property type="match status" value="1"/>
</dbReference>
<dbReference type="PROSITE" id="PS00010">
    <property type="entry name" value="ASX_HYDROXYL"/>
    <property type="match status" value="1"/>
</dbReference>
<dbReference type="PROSITE" id="PS01186">
    <property type="entry name" value="EGF_2"/>
    <property type="match status" value="1"/>
</dbReference>
<dbReference type="PROSITE" id="PS50026">
    <property type="entry name" value="EGF_3"/>
    <property type="match status" value="2"/>
</dbReference>
<dbReference type="PROSITE" id="PS01187">
    <property type="entry name" value="EGF_CA"/>
    <property type="match status" value="1"/>
</dbReference>
<dbReference type="PROSITE" id="PS50011">
    <property type="entry name" value="PROTEIN_KINASE_DOM"/>
    <property type="match status" value="1"/>
</dbReference>
<dbReference type="PROSITE" id="PS00108">
    <property type="entry name" value="PROTEIN_KINASE_ST"/>
    <property type="match status" value="1"/>
</dbReference>
<accession>Q39191</accession>
<accession>O81820</accession>
<accession>Q56WT2</accession>
<accession>Q9LMP0</accession>
<proteinExistence type="evidence at protein level"/>
<evidence type="ECO:0000250" key="1">
    <source>
        <dbReference type="UniProtKB" id="O48814"/>
    </source>
</evidence>
<evidence type="ECO:0000255" key="2"/>
<evidence type="ECO:0000255" key="3">
    <source>
        <dbReference type="PROSITE-ProRule" id="PRU00076"/>
    </source>
</evidence>
<evidence type="ECO:0000255" key="4">
    <source>
        <dbReference type="PROSITE-ProRule" id="PRU00159"/>
    </source>
</evidence>
<evidence type="ECO:0000255" key="5">
    <source>
        <dbReference type="PROSITE-ProRule" id="PRU10027"/>
    </source>
</evidence>
<evidence type="ECO:0000269" key="6">
    <source>
    </source>
</evidence>
<evidence type="ECO:0000269" key="7">
    <source>
    </source>
</evidence>
<evidence type="ECO:0000269" key="8">
    <source>
    </source>
</evidence>
<evidence type="ECO:0000269" key="9">
    <source>
    </source>
</evidence>
<evidence type="ECO:0000269" key="10">
    <source>
    </source>
</evidence>
<evidence type="ECO:0000269" key="11">
    <source>
    </source>
</evidence>
<evidence type="ECO:0000269" key="12">
    <source>
    </source>
</evidence>
<evidence type="ECO:0000269" key="13">
    <source>
    </source>
</evidence>
<evidence type="ECO:0000269" key="14">
    <source>
    </source>
</evidence>
<evidence type="ECO:0000269" key="15">
    <source>
    </source>
</evidence>
<evidence type="ECO:0000269" key="16">
    <source>
    </source>
</evidence>
<evidence type="ECO:0000305" key="17"/>
<comment type="function">
    <text evidence="8 11 12">Serine/threonine-protein kinase that may function as a signaling receptor of extracellular matrix component. Binding to pectin may have significance in the control of cell expansion, morphogenesis and development. Required during plant's response to pathogen infection and in plant defense against heavy metal toxicity. Phosphorylates the oxygen-evolving enhancer protein 2 (OEE2) in an GRP-3-dependent manner.</text>
</comment>
<comment type="catalytic activity">
    <reaction>
        <text>L-seryl-[protein] + ATP = O-phospho-L-seryl-[protein] + ADP + H(+)</text>
        <dbReference type="Rhea" id="RHEA:17989"/>
        <dbReference type="Rhea" id="RHEA-COMP:9863"/>
        <dbReference type="Rhea" id="RHEA-COMP:11604"/>
        <dbReference type="ChEBI" id="CHEBI:15378"/>
        <dbReference type="ChEBI" id="CHEBI:29999"/>
        <dbReference type="ChEBI" id="CHEBI:30616"/>
        <dbReference type="ChEBI" id="CHEBI:83421"/>
        <dbReference type="ChEBI" id="CHEBI:456216"/>
    </reaction>
</comment>
<comment type="catalytic activity">
    <reaction>
        <text>L-threonyl-[protein] + ATP = O-phospho-L-threonyl-[protein] + ADP + H(+)</text>
        <dbReference type="Rhea" id="RHEA:46608"/>
        <dbReference type="Rhea" id="RHEA-COMP:11060"/>
        <dbReference type="Rhea" id="RHEA-COMP:11605"/>
        <dbReference type="ChEBI" id="CHEBI:15378"/>
        <dbReference type="ChEBI" id="CHEBI:30013"/>
        <dbReference type="ChEBI" id="CHEBI:30616"/>
        <dbReference type="ChEBI" id="CHEBI:61977"/>
        <dbReference type="ChEBI" id="CHEBI:456216"/>
    </reaction>
</comment>
<comment type="subunit">
    <text evidence="9 10 11">Interacts with the glycine-rich proteins GRP3 and GRP3S, and the type 2C protein phosphatase KAPP. Component of a 500 kDa complex, composed of WAK1, GRP3 and KAPP. Interacts with the oxygen-evolving enhancer protein 2 (OEE2).</text>
</comment>
<comment type="interaction">
    <interactant intactId="EBI-2320121">
        <id>Q39191</id>
    </interactant>
    <interactant intactId="EBI-1541435">
        <id>Q9SL15</id>
        <label>GRP3</label>
    </interactant>
    <organismsDiffer>false</organismsDiffer>
    <experiments>5</experiments>
</comment>
<comment type="interaction">
    <interactant intactId="EBI-2320121">
        <id>Q39191</id>
    </interactant>
    <interactant intactId="EBI-2319984">
        <id>Q9ZSJ6</id>
        <label>GRP3S</label>
    </interactant>
    <organismsDiffer>false</organismsDiffer>
    <experiments>2</experiments>
</comment>
<comment type="subcellular location">
    <subcellularLocation>
        <location evidence="15">Membrane</location>
        <topology evidence="15">Single-pass type I membrane protein</topology>
    </subcellularLocation>
</comment>
<comment type="tissue specificity">
    <text evidence="6 9 13 16">Predominantly expressed in green tissues such as stems and leaves. Detected at organ junctions.</text>
</comment>
<comment type="developmental stage">
    <text evidence="8">Expressed in shoot and root apical meristems, and in expanding leaves and sepals.</text>
</comment>
<comment type="induction">
    <text evidence="6 7 8 9 12 16">Induced by salicylic acid (SA) or INA, methyl jasmonate, ethylene, wounding and pathogen infection. Accumulated in roots after Aluminum exposure. Up-regulated by GRP3.</text>
</comment>
<comment type="miscellaneous">
    <text>Binding to polygalacturonic acid (PGA) multimers is calcium-dependent.</text>
</comment>
<comment type="similarity">
    <text evidence="4">Belongs to the protein kinase superfamily. Ser/Thr protein kinase family.</text>
</comment>
<comment type="sequence caution" evidence="17">
    <conflict type="frameshift">
        <sequence resource="EMBL-CDS" id="AAA32844"/>
    </conflict>
</comment>
<comment type="sequence caution" evidence="17">
    <conflict type="erroneous gene model prediction">
        <sequence resource="EMBL-CDS" id="AAF81356"/>
    </conflict>
</comment>
<feature type="signal peptide" evidence="2">
    <location>
        <begin position="1"/>
        <end position="24"/>
    </location>
</feature>
<feature type="chain" id="PRO_0000253300" description="Wall-associated receptor kinase 1">
    <location>
        <begin position="25"/>
        <end position="735"/>
    </location>
</feature>
<feature type="topological domain" description="Extracellular" evidence="2">
    <location>
        <begin position="25"/>
        <end position="331"/>
    </location>
</feature>
<feature type="transmembrane region" description="Helical" evidence="2">
    <location>
        <begin position="332"/>
        <end position="352"/>
    </location>
</feature>
<feature type="topological domain" description="Cytoplasmic" evidence="2">
    <location>
        <begin position="353"/>
        <end position="735"/>
    </location>
</feature>
<feature type="domain" description="EGF-like 1" evidence="3">
    <location>
        <begin position="234"/>
        <end position="281"/>
    </location>
</feature>
<feature type="domain" description="EGF-like 2; calcium-binding" evidence="3">
    <location>
        <begin position="282"/>
        <end position="328"/>
    </location>
</feature>
<feature type="domain" description="Protein kinase" evidence="4">
    <location>
        <begin position="409"/>
        <end position="692"/>
    </location>
</feature>
<feature type="region of interest" description="Polygalacturonic acid-binding">
    <location>
        <begin position="67"/>
        <end position="254"/>
    </location>
</feature>
<feature type="active site" description="Proton acceptor" evidence="4 5">
    <location>
        <position position="534"/>
    </location>
</feature>
<feature type="binding site" evidence="4">
    <location>
        <begin position="415"/>
        <end position="423"/>
    </location>
    <ligand>
        <name>ATP</name>
        <dbReference type="ChEBI" id="CHEBI:30616"/>
    </ligand>
</feature>
<feature type="binding site" evidence="4">
    <location>
        <position position="437"/>
    </location>
    <ligand>
        <name>ATP</name>
        <dbReference type="ChEBI" id="CHEBI:30616"/>
    </ligand>
</feature>
<feature type="modified residue" description="Phosphothreonine" evidence="1">
    <location>
        <position position="398"/>
    </location>
</feature>
<feature type="modified residue" description="Phosphotyrosine" evidence="1">
    <location>
        <position position="482"/>
    </location>
</feature>
<feature type="modified residue" description="Phosphothreonine" evidence="1">
    <location>
        <position position="568"/>
    </location>
</feature>
<feature type="modified residue" description="Phosphothreonine" evidence="1">
    <location>
        <position position="573"/>
    </location>
</feature>
<feature type="modified residue" description="Phosphotyrosine" evidence="1">
    <location>
        <position position="581"/>
    </location>
</feature>
<feature type="glycosylation site" description="N-linked (GlcNAc...) asparagine" evidence="2">
    <location>
        <position position="38"/>
    </location>
</feature>
<feature type="glycosylation site" description="N-linked (GlcNAc...) asparagine" evidence="2">
    <location>
        <position position="56"/>
    </location>
</feature>
<feature type="glycosylation site" description="N-linked (GlcNAc...) asparagine" evidence="2">
    <location>
        <position position="80"/>
    </location>
</feature>
<feature type="glycosylation site" description="N-linked (GlcNAc...) asparagine" evidence="2">
    <location>
        <position position="90"/>
    </location>
</feature>
<feature type="glycosylation site" description="N-linked (GlcNAc...) asparagine" evidence="2">
    <location>
        <position position="113"/>
    </location>
</feature>
<feature type="glycosylation site" description="N-linked (GlcNAc...) asparagine" evidence="2">
    <location>
        <position position="140"/>
    </location>
</feature>
<feature type="glycosylation site" description="N-linked (GlcNAc...) asparagine" evidence="2">
    <location>
        <position position="209"/>
    </location>
</feature>
<feature type="glycosylation site" description="N-linked (GlcNAc...) asparagine" evidence="2">
    <location>
        <position position="235"/>
    </location>
</feature>
<feature type="glycosylation site" description="N-linked (GlcNAc...) asparagine" evidence="2">
    <location>
        <position position="250"/>
    </location>
</feature>
<feature type="glycosylation site" description="N-linked (GlcNAc...) asparagine" evidence="2">
    <location>
        <position position="296"/>
    </location>
</feature>
<feature type="disulfide bond" evidence="3">
    <location>
        <begin position="238"/>
        <end position="253"/>
    </location>
</feature>
<feature type="disulfide bond" evidence="3">
    <location>
        <begin position="247"/>
        <end position="264"/>
    </location>
</feature>
<feature type="disulfide bond" evidence="3">
    <location>
        <begin position="266"/>
        <end position="280"/>
    </location>
</feature>
<feature type="disulfide bond" evidence="3">
    <location>
        <begin position="286"/>
        <end position="303"/>
    </location>
</feature>
<feature type="disulfide bond" evidence="3">
    <location>
        <begin position="297"/>
        <end position="312"/>
    </location>
</feature>
<feature type="disulfide bond" evidence="3">
    <location>
        <begin position="314"/>
        <end position="327"/>
    </location>
</feature>
<feature type="mutagenesis site" description="Decreases the binding to dimeric PGA; when associated with T-101 and T-102." evidence="14">
    <original>R</original>
    <variation>Q</variation>
    <location>
        <position position="67"/>
    </location>
</feature>
<feature type="mutagenesis site" description="Decreases the binding to dimeric PGA; when associated with Q-166. Decreases the binding to multimeric PGA; when associated with T-101; T-102 and Q-166." evidence="14">
    <original>R</original>
    <variation>Q</variation>
    <location>
        <position position="91"/>
    </location>
</feature>
<feature type="mutagenesis site" description="Decreases the binding to dimeric PGA; when associated with Q-67 and T-102. Abolishes the binding to dimeric PGA; when associated with T-102 and Q-166." evidence="14">
    <original>K</original>
    <variation>T</variation>
    <location>
        <position position="101"/>
    </location>
</feature>
<feature type="mutagenesis site" description="Decreases the binding to dimeric PGA; when associated with Q-67 and T-101. Abolishes the binding to dimeric PGA; when associated with T-101 and Q-166." evidence="14">
    <original>K</original>
    <variation>T</variation>
    <location>
        <position position="102"/>
    </location>
</feature>
<feature type="mutagenesis site" description="Decreases the binding to dimeric PGA; when associated with Q-91. Abolishes the binding to dimeric PGA; when associated with T-101 and T-202." evidence="14">
    <original>R</original>
    <variation>Q</variation>
    <location>
        <position position="166"/>
    </location>
</feature>
<feature type="sequence conflict" description="In Ref. 5; AAA32844." evidence="17" ref="5">
    <original>S</original>
    <variation>C</variation>
    <location>
        <position position="212"/>
    </location>
</feature>
<feature type="sequence conflict" description="In Ref. 5; AAA32844." evidence="17" ref="5">
    <original>T</original>
    <variation>I</variation>
    <location>
        <position position="244"/>
    </location>
</feature>
<feature type="sequence conflict" description="In Ref. 5; AAA32844." evidence="17" ref="5">
    <location>
        <begin position="386"/>
        <end position="387"/>
    </location>
</feature>
<feature type="sequence conflict" description="In Ref. 5; AAA32844." evidence="17" ref="5">
    <original>S</original>
    <variation>P</variation>
    <location>
        <position position="458"/>
    </location>
</feature>
<feature type="sequence conflict" description="In Ref. 5; AAA32844." evidence="17" ref="5">
    <original>RLMGEE</original>
    <variation>TNGRG</variation>
    <location>
        <begin position="663"/>
        <end position="668"/>
    </location>
</feature>
<keyword id="KW-0067">ATP-binding</keyword>
<keyword id="KW-0106">Calcium</keyword>
<keyword id="KW-1015">Disulfide bond</keyword>
<keyword id="KW-0245">EGF-like domain</keyword>
<keyword id="KW-0325">Glycoprotein</keyword>
<keyword id="KW-0418">Kinase</keyword>
<keyword id="KW-0472">Membrane</keyword>
<keyword id="KW-0547">Nucleotide-binding</keyword>
<keyword id="KW-0597">Phosphoprotein</keyword>
<keyword id="KW-1185">Reference proteome</keyword>
<keyword id="KW-0677">Repeat</keyword>
<keyword id="KW-0723">Serine/threonine-protein kinase</keyword>
<keyword id="KW-0732">Signal</keyword>
<keyword id="KW-0808">Transferase</keyword>
<keyword id="KW-0812">Transmembrane</keyword>
<keyword id="KW-1133">Transmembrane helix</keyword>
<gene>
    <name type="primary">WAK1</name>
    <name type="synonym">PRO25</name>
    <name type="ordered locus">At1g21250</name>
    <name type="ORF">F16F4.6</name>
</gene>
<name>WAK1_ARATH</name>